<sequence length="108" mass="11295">AFAGILADADITAALAACKAEGSFKHGEFFTKIGLKGKSAADIKKVFGIIDQDKSDFVEEDELKLFLQNFSAGARALTDAETATFLKAGDSDGDGKIGVEEFAAMVKG</sequence>
<comment type="function">
    <text evidence="2 3">In muscle, parvalbumin is thought to be involved in relaxation after contraction. It binds two calcium ions (By similarity).</text>
</comment>
<comment type="mass spectrometry" mass="11329.744" error="0.0033" method="Electrospray" evidence="6"/>
<comment type="miscellaneous">
    <text evidence="2 6">Is regarded as an important allergen.</text>
</comment>
<comment type="miscellaneous">
    <text evidence="6">On the 2D-gel the determined pI of this protein is: 4.55, its MW is: 11.30 kDa.</text>
</comment>
<comment type="similarity">
    <text evidence="4">Belongs to the parvalbumin family.</text>
</comment>
<protein>
    <recommendedName>
        <fullName evidence="7">Parvalbumin beta 1</fullName>
    </recommendedName>
</protein>
<feature type="chain" id="PRO_0000399437" description="Parvalbumin beta 1">
    <location>
        <begin position="1"/>
        <end position="108"/>
    </location>
</feature>
<feature type="domain" description="EF-hand 1" evidence="5">
    <location>
        <begin position="38"/>
        <end position="73"/>
    </location>
</feature>
<feature type="domain" description="EF-hand 2" evidence="5">
    <location>
        <begin position="77"/>
        <end position="108"/>
    </location>
</feature>
<feature type="binding site" evidence="1 5">
    <location>
        <position position="51"/>
    </location>
    <ligand>
        <name>Ca(2+)</name>
        <dbReference type="ChEBI" id="CHEBI:29108"/>
        <label>1</label>
    </ligand>
</feature>
<feature type="binding site" evidence="1 5">
    <location>
        <position position="53"/>
    </location>
    <ligand>
        <name>Ca(2+)</name>
        <dbReference type="ChEBI" id="CHEBI:29108"/>
        <label>1</label>
    </ligand>
</feature>
<feature type="binding site" evidence="1 5">
    <location>
        <position position="55"/>
    </location>
    <ligand>
        <name>Ca(2+)</name>
        <dbReference type="ChEBI" id="CHEBI:29108"/>
        <label>1</label>
    </ligand>
</feature>
<feature type="binding site" evidence="1">
    <location>
        <position position="57"/>
    </location>
    <ligand>
        <name>Ca(2+)</name>
        <dbReference type="ChEBI" id="CHEBI:29108"/>
        <label>1</label>
    </ligand>
</feature>
<feature type="binding site" evidence="1">
    <location>
        <position position="59"/>
    </location>
    <ligand>
        <name>Ca(2+)</name>
        <dbReference type="ChEBI" id="CHEBI:29108"/>
        <label>1</label>
    </ligand>
</feature>
<feature type="binding site" evidence="1 5">
    <location>
        <position position="62"/>
    </location>
    <ligand>
        <name>Ca(2+)</name>
        <dbReference type="ChEBI" id="CHEBI:29108"/>
        <label>1</label>
    </ligand>
</feature>
<feature type="binding site" evidence="1 5">
    <location>
        <position position="90"/>
    </location>
    <ligand>
        <name>Ca(2+)</name>
        <dbReference type="ChEBI" id="CHEBI:29108"/>
        <label>2</label>
    </ligand>
</feature>
<feature type="binding site" evidence="1 5">
    <location>
        <position position="92"/>
    </location>
    <ligand>
        <name>Ca(2+)</name>
        <dbReference type="ChEBI" id="CHEBI:29108"/>
        <label>2</label>
    </ligand>
</feature>
<feature type="binding site" evidence="1 5">
    <location>
        <position position="94"/>
    </location>
    <ligand>
        <name>Ca(2+)</name>
        <dbReference type="ChEBI" id="CHEBI:29108"/>
        <label>2</label>
    </ligand>
</feature>
<feature type="binding site" evidence="5">
    <location>
        <position position="96"/>
    </location>
    <ligand>
        <name>Ca(2+)</name>
        <dbReference type="ChEBI" id="CHEBI:29108"/>
        <label>2</label>
    </ligand>
</feature>
<feature type="binding site" evidence="1 5">
    <location>
        <position position="101"/>
    </location>
    <ligand>
        <name>Ca(2+)</name>
        <dbReference type="ChEBI" id="CHEBI:29108"/>
        <label>2</label>
    </ligand>
</feature>
<feature type="modified residue" description="N-acetylalanine" evidence="6">
    <location>
        <position position="1"/>
    </location>
</feature>
<feature type="unsure residue" description="I or L" evidence="6">
    <location>
        <position position="5"/>
    </location>
</feature>
<feature type="unsure residue" description="L or I" evidence="6">
    <location>
        <position position="6"/>
    </location>
</feature>
<feature type="unsure residue" description="I or L" evidence="6">
    <location>
        <position position="11"/>
    </location>
</feature>
<feature type="unsure residue" description="L or I" evidence="6">
    <location>
        <position position="15"/>
    </location>
</feature>
<feature type="unsure residue" description="K or Q" evidence="6">
    <location>
        <position position="19"/>
    </location>
</feature>
<feature type="unsure residue" description="K or Q" evidence="6">
    <location>
        <position position="25"/>
    </location>
</feature>
<feature type="unsure residue" description="K or Q" evidence="6">
    <location>
        <position position="32"/>
    </location>
</feature>
<feature type="unsure residue" description="I or L" evidence="6">
    <location>
        <position position="33"/>
    </location>
</feature>
<feature type="unsure residue" description="L or I" evidence="6">
    <location>
        <position position="35"/>
    </location>
</feature>
<feature type="unsure residue" description="K or Q" evidence="6">
    <location>
        <position position="36"/>
    </location>
</feature>
<feature type="unsure residue" description="K or Q" evidence="6">
    <location>
        <position position="38"/>
    </location>
</feature>
<feature type="unsure residue" description="I or L" evidence="6">
    <location>
        <position position="43"/>
    </location>
</feature>
<feature type="unsure residue" description="K or Q" evidence="6">
    <location>
        <position position="44"/>
    </location>
</feature>
<feature type="unsure residue" description="K or Q" evidence="6">
    <location>
        <position position="45"/>
    </location>
</feature>
<feature type="unsure residue" description="I or L" evidence="6">
    <location>
        <position position="49"/>
    </location>
</feature>
<feature type="unsure residue" description="I or L" evidence="6">
    <location>
        <position position="50"/>
    </location>
</feature>
<feature type="unsure residue" description="Q or K" evidence="6">
    <location>
        <position position="52"/>
    </location>
</feature>
<feature type="unsure residue" description="K or Q" evidence="6">
    <location>
        <position position="54"/>
    </location>
</feature>
<feature type="unsure residue" description="L or I" evidence="6">
    <location>
        <position position="63"/>
    </location>
</feature>
<feature type="unsure residue" description="K or Q" evidence="6">
    <location>
        <position position="64"/>
    </location>
</feature>
<feature type="unsure residue" description="L or I" evidence="6">
    <location>
        <position position="65"/>
    </location>
</feature>
<feature type="unsure residue" description="L or I" evidence="6">
    <location>
        <position position="67"/>
    </location>
</feature>
<feature type="unsure residue" description="Q or K" evidence="6">
    <location>
        <position position="68"/>
    </location>
</feature>
<feature type="unsure residue" description="L or I" evidence="6">
    <location>
        <position position="77"/>
    </location>
</feature>
<feature type="unsure residue" description="L or I" evidence="6">
    <location>
        <position position="86"/>
    </location>
</feature>
<feature type="unsure residue" description="K or Q" evidence="6">
    <location>
        <position position="87"/>
    </location>
</feature>
<feature type="unsure residue" description="K or Q" evidence="6">
    <location>
        <position position="96"/>
    </location>
</feature>
<feature type="unsure residue" description="I or L" evidence="6">
    <location>
        <position position="97"/>
    </location>
</feature>
<feature type="unsure residue" description="K or Q" evidence="6">
    <location>
        <position position="107"/>
    </location>
</feature>
<organism>
    <name type="scientific">Merluccius senegalensis</name>
    <name type="common">Senegalese hake</name>
    <dbReference type="NCBI Taxonomy" id="89953"/>
    <lineage>
        <taxon>Eukaryota</taxon>
        <taxon>Metazoa</taxon>
        <taxon>Chordata</taxon>
        <taxon>Craniata</taxon>
        <taxon>Vertebrata</taxon>
        <taxon>Euteleostomi</taxon>
        <taxon>Actinopterygii</taxon>
        <taxon>Neopterygii</taxon>
        <taxon>Teleostei</taxon>
        <taxon>Neoteleostei</taxon>
        <taxon>Acanthomorphata</taxon>
        <taxon>Zeiogadaria</taxon>
        <taxon>Gadariae</taxon>
        <taxon>Gadiformes</taxon>
        <taxon>Gadoidei</taxon>
        <taxon>Merlucciidae</taxon>
        <taxon>Merluccius</taxon>
    </lineage>
</organism>
<proteinExistence type="evidence at protein level"/>
<keyword id="KW-0007">Acetylation</keyword>
<keyword id="KW-0020">Allergen</keyword>
<keyword id="KW-0106">Calcium</keyword>
<keyword id="KW-0903">Direct protein sequencing</keyword>
<keyword id="KW-0479">Metal-binding</keyword>
<keyword id="KW-0514">Muscle protein</keyword>
<keyword id="KW-0677">Repeat</keyword>
<evidence type="ECO:0000250" key="1">
    <source>
        <dbReference type="UniProtKB" id="P02621"/>
    </source>
</evidence>
<evidence type="ECO:0000250" key="2">
    <source>
        <dbReference type="UniProtKB" id="P02622"/>
    </source>
</evidence>
<evidence type="ECO:0000250" key="3">
    <source>
        <dbReference type="UniProtKB" id="P02624"/>
    </source>
</evidence>
<evidence type="ECO:0000255" key="4"/>
<evidence type="ECO:0000255" key="5">
    <source>
        <dbReference type="PROSITE-ProRule" id="PRU00448"/>
    </source>
</evidence>
<evidence type="ECO:0000269" key="6">
    <source>
    </source>
</evidence>
<evidence type="ECO:0000303" key="7">
    <source>
    </source>
</evidence>
<evidence type="ECO:0000305" key="8"/>
<reference evidence="8" key="1">
    <citation type="journal article" date="2010" name="J. Proteome Res.">
        <title>Extensive de novo sequencing of new parvalbumin isoforms using a novel combination of bottom-up proteomics, accurate molecular mass measurement by FTICR-MS, and selected MS/MS ion monitoring.</title>
        <authorList>
            <person name="Carrera M."/>
            <person name="Canas B."/>
            <person name="Vazquez J."/>
            <person name="Gallardo J.M."/>
        </authorList>
    </citation>
    <scope>PROTEIN SEQUENCE</scope>
    <scope>MASS SPECTROMETRY</scope>
    <scope>ACETYLATION AT ALA-1</scope>
    <source>
        <tissue evidence="6">Muscle</tissue>
    </source>
</reference>
<dbReference type="SMR" id="P86778"/>
<dbReference type="iPTMnet" id="P86778"/>
<dbReference type="GO" id="GO:0005737">
    <property type="term" value="C:cytoplasm"/>
    <property type="evidence" value="ECO:0007669"/>
    <property type="project" value="TreeGrafter"/>
</dbReference>
<dbReference type="GO" id="GO:0005509">
    <property type="term" value="F:calcium ion binding"/>
    <property type="evidence" value="ECO:0007669"/>
    <property type="project" value="InterPro"/>
</dbReference>
<dbReference type="CDD" id="cd16255">
    <property type="entry name" value="EFh_parvalbumin_beta"/>
    <property type="match status" value="1"/>
</dbReference>
<dbReference type="FunFam" id="1.10.238.10:FF:000060">
    <property type="entry name" value="Parvalbumin, thymic"/>
    <property type="match status" value="1"/>
</dbReference>
<dbReference type="Gene3D" id="1.10.238.10">
    <property type="entry name" value="EF-hand"/>
    <property type="match status" value="1"/>
</dbReference>
<dbReference type="InterPro" id="IPR011992">
    <property type="entry name" value="EF-hand-dom_pair"/>
</dbReference>
<dbReference type="InterPro" id="IPR018247">
    <property type="entry name" value="EF_Hand_1_Ca_BS"/>
</dbReference>
<dbReference type="InterPro" id="IPR002048">
    <property type="entry name" value="EF_hand_dom"/>
</dbReference>
<dbReference type="InterPro" id="IPR008080">
    <property type="entry name" value="Parvalbumin"/>
</dbReference>
<dbReference type="PANTHER" id="PTHR11653:SF12">
    <property type="entry name" value="PARVALBUMIN"/>
    <property type="match status" value="1"/>
</dbReference>
<dbReference type="PANTHER" id="PTHR11653">
    <property type="entry name" value="PARVALBUMIN ALPHA"/>
    <property type="match status" value="1"/>
</dbReference>
<dbReference type="Pfam" id="PF13499">
    <property type="entry name" value="EF-hand_7"/>
    <property type="match status" value="1"/>
</dbReference>
<dbReference type="PRINTS" id="PR01697">
    <property type="entry name" value="PARVALBUMIN"/>
</dbReference>
<dbReference type="SUPFAM" id="SSF47473">
    <property type="entry name" value="EF-hand"/>
    <property type="match status" value="1"/>
</dbReference>
<dbReference type="PROSITE" id="PS00018">
    <property type="entry name" value="EF_HAND_1"/>
    <property type="match status" value="2"/>
</dbReference>
<dbReference type="PROSITE" id="PS50222">
    <property type="entry name" value="EF_HAND_2"/>
    <property type="match status" value="2"/>
</dbReference>
<accession>P86778</accession>
<name>PRVB1_MERSE</name>